<gene>
    <name evidence="1" type="primary">rplV</name>
    <name type="ordered locus">AZOSEA21620</name>
    <name type="ORF">ebA3832</name>
</gene>
<proteinExistence type="inferred from homology"/>
<evidence type="ECO:0000255" key="1">
    <source>
        <dbReference type="HAMAP-Rule" id="MF_01331"/>
    </source>
</evidence>
<evidence type="ECO:0000305" key="2"/>
<keyword id="KW-1185">Reference proteome</keyword>
<keyword id="KW-0687">Ribonucleoprotein</keyword>
<keyword id="KW-0689">Ribosomal protein</keyword>
<keyword id="KW-0694">RNA-binding</keyword>
<keyword id="KW-0699">rRNA-binding</keyword>
<feature type="chain" id="PRO_0000243116" description="Large ribosomal subunit protein uL22">
    <location>
        <begin position="1"/>
        <end position="109"/>
    </location>
</feature>
<name>RL22_AROAE</name>
<comment type="function">
    <text evidence="1">This protein binds specifically to 23S rRNA; its binding is stimulated by other ribosomal proteins, e.g. L4, L17, and L20. It is important during the early stages of 50S assembly. It makes multiple contacts with different domains of the 23S rRNA in the assembled 50S subunit and ribosome (By similarity).</text>
</comment>
<comment type="function">
    <text evidence="1">The globular domain of the protein is located near the polypeptide exit tunnel on the outside of the subunit, while an extended beta-hairpin is found that lines the wall of the exit tunnel in the center of the 70S ribosome.</text>
</comment>
<comment type="subunit">
    <text evidence="1">Part of the 50S ribosomal subunit.</text>
</comment>
<comment type="similarity">
    <text evidence="1">Belongs to the universal ribosomal protein uL22 family.</text>
</comment>
<organism>
    <name type="scientific">Aromatoleum aromaticum (strain DSM 19018 / LMG 30748 / EbN1)</name>
    <name type="common">Azoarcus sp. (strain EbN1)</name>
    <dbReference type="NCBI Taxonomy" id="76114"/>
    <lineage>
        <taxon>Bacteria</taxon>
        <taxon>Pseudomonadati</taxon>
        <taxon>Pseudomonadota</taxon>
        <taxon>Betaproteobacteria</taxon>
        <taxon>Rhodocyclales</taxon>
        <taxon>Rhodocyclaceae</taxon>
        <taxon>Aromatoleum</taxon>
    </lineage>
</organism>
<protein>
    <recommendedName>
        <fullName evidence="1">Large ribosomal subunit protein uL22</fullName>
    </recommendedName>
    <alternativeName>
        <fullName evidence="2">50S ribosomal protein L22</fullName>
    </alternativeName>
</protein>
<sequence length="109" mass="11956">METRAILRGVRLSAQKGRLVADQVRGRPVDQALNILAFSPKKGAQIIRKVMESAIANAEHNDGADIDTLKVKTIYVEEGMSLKRFAARAKGRGARILKPTCHIYVTVGE</sequence>
<reference key="1">
    <citation type="journal article" date="2005" name="Arch. Microbiol.">
        <title>The genome sequence of an anaerobic aromatic-degrading denitrifying bacterium, strain EbN1.</title>
        <authorList>
            <person name="Rabus R."/>
            <person name="Kube M."/>
            <person name="Heider J."/>
            <person name="Beck A."/>
            <person name="Heitmann K."/>
            <person name="Widdel F."/>
            <person name="Reinhardt R."/>
        </authorList>
    </citation>
    <scope>NUCLEOTIDE SEQUENCE [LARGE SCALE GENOMIC DNA]</scope>
    <source>
        <strain>DSM 19018 / LMG 30748 / EbN1</strain>
    </source>
</reference>
<dbReference type="EMBL" id="CR555306">
    <property type="protein sequence ID" value="CAI08287.1"/>
    <property type="molecule type" value="Genomic_DNA"/>
</dbReference>
<dbReference type="RefSeq" id="WP_011237977.1">
    <property type="nucleotide sequence ID" value="NC_006513.1"/>
</dbReference>
<dbReference type="SMR" id="Q5P327"/>
<dbReference type="STRING" id="76114.ebA3832"/>
<dbReference type="KEGG" id="eba:ebA3832"/>
<dbReference type="eggNOG" id="COG0091">
    <property type="taxonomic scope" value="Bacteria"/>
</dbReference>
<dbReference type="HOGENOM" id="CLU_083987_3_3_4"/>
<dbReference type="OrthoDB" id="9805969at2"/>
<dbReference type="Proteomes" id="UP000006552">
    <property type="component" value="Chromosome"/>
</dbReference>
<dbReference type="GO" id="GO:0022625">
    <property type="term" value="C:cytosolic large ribosomal subunit"/>
    <property type="evidence" value="ECO:0007669"/>
    <property type="project" value="TreeGrafter"/>
</dbReference>
<dbReference type="GO" id="GO:0019843">
    <property type="term" value="F:rRNA binding"/>
    <property type="evidence" value="ECO:0007669"/>
    <property type="project" value="UniProtKB-UniRule"/>
</dbReference>
<dbReference type="GO" id="GO:0003735">
    <property type="term" value="F:structural constituent of ribosome"/>
    <property type="evidence" value="ECO:0007669"/>
    <property type="project" value="InterPro"/>
</dbReference>
<dbReference type="GO" id="GO:0006412">
    <property type="term" value="P:translation"/>
    <property type="evidence" value="ECO:0007669"/>
    <property type="project" value="UniProtKB-UniRule"/>
</dbReference>
<dbReference type="CDD" id="cd00336">
    <property type="entry name" value="Ribosomal_L22"/>
    <property type="match status" value="1"/>
</dbReference>
<dbReference type="FunFam" id="3.90.470.10:FF:000001">
    <property type="entry name" value="50S ribosomal protein L22"/>
    <property type="match status" value="1"/>
</dbReference>
<dbReference type="Gene3D" id="3.90.470.10">
    <property type="entry name" value="Ribosomal protein L22/L17"/>
    <property type="match status" value="1"/>
</dbReference>
<dbReference type="HAMAP" id="MF_01331_B">
    <property type="entry name" value="Ribosomal_uL22_B"/>
    <property type="match status" value="1"/>
</dbReference>
<dbReference type="InterPro" id="IPR001063">
    <property type="entry name" value="Ribosomal_uL22"/>
</dbReference>
<dbReference type="InterPro" id="IPR005727">
    <property type="entry name" value="Ribosomal_uL22_bac/chlpt-type"/>
</dbReference>
<dbReference type="InterPro" id="IPR047867">
    <property type="entry name" value="Ribosomal_uL22_bac/org-type"/>
</dbReference>
<dbReference type="InterPro" id="IPR018260">
    <property type="entry name" value="Ribosomal_uL22_CS"/>
</dbReference>
<dbReference type="InterPro" id="IPR036394">
    <property type="entry name" value="Ribosomal_uL22_sf"/>
</dbReference>
<dbReference type="NCBIfam" id="TIGR01044">
    <property type="entry name" value="rplV_bact"/>
    <property type="match status" value="1"/>
</dbReference>
<dbReference type="PANTHER" id="PTHR13501">
    <property type="entry name" value="CHLOROPLAST 50S RIBOSOMAL PROTEIN L22-RELATED"/>
    <property type="match status" value="1"/>
</dbReference>
<dbReference type="PANTHER" id="PTHR13501:SF8">
    <property type="entry name" value="LARGE RIBOSOMAL SUBUNIT PROTEIN UL22M"/>
    <property type="match status" value="1"/>
</dbReference>
<dbReference type="Pfam" id="PF00237">
    <property type="entry name" value="Ribosomal_L22"/>
    <property type="match status" value="1"/>
</dbReference>
<dbReference type="SUPFAM" id="SSF54843">
    <property type="entry name" value="Ribosomal protein L22"/>
    <property type="match status" value="1"/>
</dbReference>
<dbReference type="PROSITE" id="PS00464">
    <property type="entry name" value="RIBOSOMAL_L22"/>
    <property type="match status" value="1"/>
</dbReference>
<accession>Q5P327</accession>